<proteinExistence type="evidence at protein level"/>
<reference key="1">
    <citation type="journal article" date="2011" name="Cell">
        <title>Insight into structure and assembly of the nuclear pore complex by utilizing the genome of a eukaryotic thermophile.</title>
        <authorList>
            <person name="Amlacher S."/>
            <person name="Sarges P."/>
            <person name="Flemming D."/>
            <person name="van Noort V."/>
            <person name="Kunze R."/>
            <person name="Devos D.P."/>
            <person name="Arumugam M."/>
            <person name="Bork P."/>
            <person name="Hurt E."/>
        </authorList>
    </citation>
    <scope>NUCLEOTIDE SEQUENCE [LARGE SCALE GENOMIC DNA]</scope>
    <source>
        <strain>DSM 1495 / CBS 144.50 / IMI 039719</strain>
    </source>
</reference>
<sequence>MPKRKVAALEKVEADLVNLQYKIRRDPKSYAQEFYDQWLAYDAQRQIFFSSPATASSEDIKKFHDLVDLVAHVADLYPDITAPFPDHLKQLLTQHHTTLDKDLREKVVGSLVLLRRKDVIDSVSLLTTLFPILISSPSKSLRTLIYTKIISDLRESNAKATNHKLNRTIQTVLHNLLTSDRTSSKGLWACRITRELWRRQIWTDARPCDVMKEACLSDNEKVVVGGCRFFLGGDKEREELEDEESDEDIDLKKVKHQSLINKKTKKRQKAYEKALEKIKKQERKKHAPHPLNFSALHLINDPQGFAEKLFQKHLQNLKNKFTLENRLLVLQLVTRLVGLHKLTVLPLYSWFVRYLTPKQLNVTTFLACLAQATHNLVPPDVIEPLVVKIANEFVSEASAAEVAAAGLNAIREVAMRQPLCMSETLLQDLVLYQKSKDKGVMMAAKGLQSLYREVYPEMLQKKFRGKEATMGLRAGEIKPLKFGEEEAAEDIEGIELLEKYKEEQKKKKVEQGEGDGENKDGGEEDEDDGWNSSEWEVASDTSESSGGWIDVSSESEDEGPAKKRQRKDSGAEEVPELVDTSKTNGEVQTNGEAKAGSEARPNGTAESTAEAEARRISKLATTTILTPADLAKLKELRQQAKLDKMLGNTAKRKKELIEKHIEDGLTAEDIELPAQLGKKATKEEKLERARENKPSRDEHKSTQALRKAKKEAEGKSSTNKEKARKKNFFMTLGKAKQKQKRSLVETRKALRAHIKRSKAGGRRRNGQ</sequence>
<gene>
    <name type="primary">SDA1</name>
    <name type="ORF">CTHT_0015620</name>
</gene>
<organism>
    <name type="scientific">Chaetomium thermophilum (strain DSM 1495 / CBS 144.50 / IMI 039719)</name>
    <name type="common">Thermochaetoides thermophila</name>
    <dbReference type="NCBI Taxonomy" id="759272"/>
    <lineage>
        <taxon>Eukaryota</taxon>
        <taxon>Fungi</taxon>
        <taxon>Dikarya</taxon>
        <taxon>Ascomycota</taxon>
        <taxon>Pezizomycotina</taxon>
        <taxon>Sordariomycetes</taxon>
        <taxon>Sordariomycetidae</taxon>
        <taxon>Sordariales</taxon>
        <taxon>Chaetomiaceae</taxon>
        <taxon>Thermochaetoides</taxon>
    </lineage>
</organism>
<accession>G0S215</accession>
<feature type="chain" id="PRO_0000435806" description="Protein SDA1">
    <location>
        <begin position="1"/>
        <end position="767"/>
    </location>
</feature>
<feature type="region of interest" description="Disordered" evidence="2">
    <location>
        <begin position="504"/>
        <end position="614"/>
    </location>
</feature>
<feature type="region of interest" description="Disordered" evidence="2">
    <location>
        <begin position="662"/>
        <end position="767"/>
    </location>
</feature>
<feature type="compositionally biased region" description="Basic and acidic residues" evidence="2">
    <location>
        <begin position="504"/>
        <end position="521"/>
    </location>
</feature>
<feature type="compositionally biased region" description="Polar residues" evidence="2">
    <location>
        <begin position="580"/>
        <end position="591"/>
    </location>
</feature>
<feature type="compositionally biased region" description="Basic and acidic residues" evidence="2">
    <location>
        <begin position="680"/>
        <end position="701"/>
    </location>
</feature>
<feature type="compositionally biased region" description="Basic and acidic residues" evidence="2">
    <location>
        <begin position="710"/>
        <end position="721"/>
    </location>
</feature>
<feature type="compositionally biased region" description="Basic residues" evidence="2">
    <location>
        <begin position="749"/>
        <end position="767"/>
    </location>
</feature>
<name>SDA1_CHATD</name>
<keyword id="KW-0002">3D-structure</keyword>
<keyword id="KW-0175">Coiled coil</keyword>
<keyword id="KW-0539">Nucleus</keyword>
<keyword id="KW-0653">Protein transport</keyword>
<keyword id="KW-1185">Reference proteome</keyword>
<keyword id="KW-0690">Ribosome biogenesis</keyword>
<keyword id="KW-0813">Transport</keyword>
<dbReference type="EMBL" id="GL988039">
    <property type="protein sequence ID" value="EGS23075.1"/>
    <property type="status" value="ALT_SEQ"/>
    <property type="molecule type" value="Genomic_DNA"/>
</dbReference>
<dbReference type="RefSeq" id="XP_006692067.1">
    <property type="nucleotide sequence ID" value="XM_006692004.1"/>
</dbReference>
<dbReference type="PDB" id="8PV4">
    <property type="method" value="EM"/>
    <property type="resolution" value="2.90 A"/>
    <property type="chains" value="CR=1-767"/>
</dbReference>
<dbReference type="PDB" id="8PV6">
    <property type="method" value="EM"/>
    <property type="resolution" value="2.94 A"/>
    <property type="chains" value="CR=1-767"/>
</dbReference>
<dbReference type="PDB" id="8PV8">
    <property type="method" value="EM"/>
    <property type="resolution" value="2.91 A"/>
    <property type="chains" value="CR=1-767"/>
</dbReference>
<dbReference type="PDBsum" id="8PV4"/>
<dbReference type="PDBsum" id="8PV6"/>
<dbReference type="PDBsum" id="8PV8"/>
<dbReference type="EMDB" id="EMD-17953"/>
<dbReference type="EMDB" id="EMD-17955"/>
<dbReference type="EMDB" id="EMD-17957"/>
<dbReference type="SMR" id="G0S215"/>
<dbReference type="STRING" id="759272.G0S215"/>
<dbReference type="GeneID" id="18255600"/>
<dbReference type="KEGG" id="cthr:CTHT_0015620"/>
<dbReference type="eggNOG" id="KOG2229">
    <property type="taxonomic scope" value="Eukaryota"/>
</dbReference>
<dbReference type="HOGENOM" id="CLU_009161_2_1_1"/>
<dbReference type="OrthoDB" id="2196187at2759"/>
<dbReference type="Proteomes" id="UP000008066">
    <property type="component" value="Unassembled WGS sequence"/>
</dbReference>
<dbReference type="GO" id="GO:0005730">
    <property type="term" value="C:nucleolus"/>
    <property type="evidence" value="ECO:0007669"/>
    <property type="project" value="UniProtKB-SubCell"/>
</dbReference>
<dbReference type="GO" id="GO:0015031">
    <property type="term" value="P:protein transport"/>
    <property type="evidence" value="ECO:0007669"/>
    <property type="project" value="UniProtKB-KW"/>
</dbReference>
<dbReference type="GO" id="GO:0042273">
    <property type="term" value="P:ribosomal large subunit biogenesis"/>
    <property type="evidence" value="ECO:0007669"/>
    <property type="project" value="InterPro"/>
</dbReference>
<dbReference type="GO" id="GO:0000055">
    <property type="term" value="P:ribosomal large subunit export from nucleus"/>
    <property type="evidence" value="ECO:0007669"/>
    <property type="project" value="InterPro"/>
</dbReference>
<dbReference type="InterPro" id="IPR016024">
    <property type="entry name" value="ARM-type_fold"/>
</dbReference>
<dbReference type="InterPro" id="IPR027312">
    <property type="entry name" value="Sda1"/>
</dbReference>
<dbReference type="InterPro" id="IPR048292">
    <property type="entry name" value="SDA1_C"/>
</dbReference>
<dbReference type="InterPro" id="IPR007949">
    <property type="entry name" value="SDA1_MD"/>
</dbReference>
<dbReference type="InterPro" id="IPR012977">
    <property type="entry name" value="SDA1_N"/>
</dbReference>
<dbReference type="PANTHER" id="PTHR12730">
    <property type="entry name" value="HSDA/SDA1-RELATED"/>
    <property type="match status" value="1"/>
</dbReference>
<dbReference type="PANTHER" id="PTHR12730:SF0">
    <property type="entry name" value="PROTEIN SDA1 HOMOLOG"/>
    <property type="match status" value="1"/>
</dbReference>
<dbReference type="Pfam" id="PF21638">
    <property type="entry name" value="SDA1_C"/>
    <property type="match status" value="1"/>
</dbReference>
<dbReference type="Pfam" id="PF05285">
    <property type="entry name" value="SDA1_dom"/>
    <property type="match status" value="1"/>
</dbReference>
<dbReference type="Pfam" id="PF08158">
    <property type="entry name" value="SDA1_HEAT"/>
    <property type="match status" value="1"/>
</dbReference>
<dbReference type="SUPFAM" id="SSF48371">
    <property type="entry name" value="ARM repeat"/>
    <property type="match status" value="1"/>
</dbReference>
<comment type="function">
    <text evidence="1">Required for 60S pre-ribosomal subunits export to the cytoplasm. May also be required for 60S ribosomal subunit maturation and accumulation.</text>
</comment>
<comment type="subunit">
    <text evidence="1">Associated with the 60S pre-ribosomal particles.</text>
</comment>
<comment type="subcellular location">
    <subcellularLocation>
        <location evidence="1">Nucleus</location>
        <location evidence="1">Nucleolus</location>
    </subcellularLocation>
</comment>
<comment type="similarity">
    <text evidence="3">Belongs to the SDA1 family.</text>
</comment>
<comment type="sequence caution" evidence="3">
    <conflict type="erroneous gene model prediction">
        <sequence resource="EMBL-CDS" id="EGS23075"/>
    </conflict>
</comment>
<protein>
    <recommendedName>
        <fullName>Protein SDA1</fullName>
    </recommendedName>
</protein>
<evidence type="ECO:0000250" key="1">
    <source>
        <dbReference type="UniProtKB" id="P53313"/>
    </source>
</evidence>
<evidence type="ECO:0000256" key="2">
    <source>
        <dbReference type="SAM" id="MobiDB-lite"/>
    </source>
</evidence>
<evidence type="ECO:0000305" key="3"/>